<evidence type="ECO:0000250" key="1">
    <source>
        <dbReference type="UniProtKB" id="A7MJV9"/>
    </source>
</evidence>
<evidence type="ECO:0000269" key="2">
    <source>
    </source>
</evidence>
<evidence type="ECO:0000269" key="3">
    <source>
    </source>
</evidence>
<evidence type="ECO:0000269" key="4">
    <source>
    </source>
</evidence>
<evidence type="ECO:0000269" key="5">
    <source>
    </source>
</evidence>
<evidence type="ECO:0000269" key="6">
    <source>
    </source>
</evidence>
<evidence type="ECO:0000269" key="7">
    <source>
    </source>
</evidence>
<evidence type="ECO:0000269" key="8">
    <source>
    </source>
</evidence>
<evidence type="ECO:0000269" key="9">
    <source>
    </source>
</evidence>
<evidence type="ECO:0000269" key="10">
    <source>
    </source>
</evidence>
<evidence type="ECO:0000269" key="11">
    <source>
    </source>
</evidence>
<evidence type="ECO:0000269" key="12">
    <source>
    </source>
</evidence>
<evidence type="ECO:0000269" key="13">
    <source>
    </source>
</evidence>
<evidence type="ECO:0000269" key="14">
    <source>
    </source>
</evidence>
<evidence type="ECO:0000269" key="15">
    <source>
    </source>
</evidence>
<evidence type="ECO:0000303" key="16">
    <source>
    </source>
</evidence>
<evidence type="ECO:0000303" key="17">
    <source>
    </source>
</evidence>
<evidence type="ECO:0000305" key="18"/>
<evidence type="ECO:0000305" key="19">
    <source>
    </source>
</evidence>
<evidence type="ECO:0000312" key="20">
    <source>
        <dbReference type="EMBL" id="BAA03055.1"/>
    </source>
</evidence>
<evidence type="ECO:0007744" key="21">
    <source>
        <dbReference type="PDB" id="2RT6"/>
    </source>
</evidence>
<evidence type="ECO:0007829" key="22">
    <source>
        <dbReference type="PDB" id="2RT6"/>
    </source>
</evidence>
<feature type="initiator methionine" description="Removed" evidence="7">
    <location>
        <position position="1"/>
    </location>
</feature>
<feature type="chain" id="PRO_0000058574" description="Replication restart protein PriC">
    <location>
        <begin position="2"/>
        <end position="175"/>
    </location>
</feature>
<feature type="mutagenesis site" description="Reduced loading of DnaB in vitro, does not complement in a priB-priC deletion." evidence="12">
    <original>R</original>
    <variation>E</variation>
    <location>
        <position position="33"/>
    </location>
</feature>
<feature type="mutagenesis site" description="Reduced loading of DnaB in vitro, does not complement in a priB-priC deletion." evidence="12">
    <original>E</original>
    <variation>A</variation>
    <location>
        <position position="89"/>
    </location>
</feature>
<feature type="mutagenesis site" description="Loads DnaB in vitro, does not complement in a priB-priC deletion." evidence="12">
    <original>R</original>
    <variation>A</variation>
    <location>
        <position position="96"/>
    </location>
</feature>
<feature type="mutagenesis site" description="No longer interacts with SSB, does not load DnaB onto SSB-coated DNA substrate in vitro, does not complement in a priB-priC deletion." evidence="9">
    <original>R</original>
    <variation>A</variation>
    <location>
        <position position="121"/>
    </location>
</feature>
<feature type="mutagenesis site" description="No longer interacts with SSB, does not load DnaB onto SSB-coated DNA substrate in vitro, does not complement in a priB-priC deletion." evidence="9">
    <original>R</original>
    <variation>A</variation>
    <location>
        <position position="155"/>
    </location>
</feature>
<feature type="helix" evidence="22">
    <location>
        <begin position="3"/>
        <end position="20"/>
    </location>
</feature>
<feature type="turn" evidence="22">
    <location>
        <begin position="23"/>
        <end position="27"/>
    </location>
</feature>
<feature type="turn" evidence="22">
    <location>
        <begin position="36"/>
        <end position="38"/>
    </location>
</feature>
<feature type="helix" evidence="22">
    <location>
        <begin position="46"/>
        <end position="63"/>
    </location>
</feature>
<feature type="helix" evidence="22">
    <location>
        <begin position="64"/>
        <end position="66"/>
    </location>
</feature>
<feature type="helix" evidence="22">
    <location>
        <begin position="69"/>
        <end position="93"/>
    </location>
</feature>
<comment type="function">
    <text evidence="2 3 4 5 6 7 8 9 10 11 12 15 19">Involved in the restart of stalled replication forks, which reloads the replicative helicase (DnaB) on sites other than the origin of replication (PubMed:10540288, PubMed:10835375, PubMed:22636770). Recognizes abandoned replication forks and remodels DNA single-stranded binding protein (SSB) on ssDNA to uncover a loading site for DnaB (PubMed:23629733, PubMed:27382050). There are several restart pathways, the PriA-PriC pathway is a minor restart pathway (PubMed:11532137, PubMed:22636770). Also part of the minor PriC-Rep pathway for restart of stalled replication forks, which has a different substrate specificity than PriA (PubMed:10835375, PubMed:17382604). priB and priC have redundant roles in the cell (PubMed:10540288). Stimulates the 3'-5' helicase activity of Rep helicase in vitro (PubMed:17382604). In vitro can load the DnaB replicative helicase from a DnaB-DnaC complex on an SSB-coated stalled replication fork with no leading- or lagging-strand (or with a gap between the leading strand and fork junction) in the absence of other primosome proteins (PriA, PriB or DnaT) (PubMed:15749022, PubMed:23629733, PubMed:27382050). Also part of the major restart pathway with PriA, PriB, DnaB, DnaT and DnaG primase (PubMed:8663105). PriC may contribute to the stability of the preprimosome complex (Probable) (PubMed:8663105). Preferentially binds approximately 7-9 nucleotides of single-stranded (ss)DNA, also binds double-stranded (ds)DNA (PubMed:23819889, PubMed:23868391, PubMed:23629733). PriB is probably more important in the cell than PriC (PubMed:10540288, PubMed:22636770).</text>
</comment>
<comment type="subunit">
    <text evidence="1 9 10 12 14 15">Monomer (By similarity). Oligomerizes in the absence of DNA (PubMed:23819889). Component of the replication restart primosome, which is composed of PriA, PriB, PriC, DnaB and DnaT; DnaG primase associates transiently with this complex (PubMed:6454139, PubMed:8663105). Interacts with the C-terminus of SSB; this interaction is required for DnaB loading onto substrate replication forks (PubMed:23629733). Interacts with DnaB alone and in the DnaB-DnaC complex, probably 1:1 binding with DnaB (PubMed:27382050).</text>
</comment>
<comment type="interaction">
    <interactant intactId="EBI-1117383">
        <id>P23862</id>
    </interactant>
    <interactant intactId="EBI-547513">
        <id>P0ACJ8</id>
        <label>crp</label>
    </interactant>
    <organismsDiffer>false</organismsDiffer>
    <experiments>2</experiments>
</comment>
<comment type="interaction">
    <interactant intactId="EBI-1117383">
        <id>P23862</id>
    </interactant>
    <interactant intactId="EBI-548978">
        <id>P0ACB0</id>
        <label>dnaB</label>
    </interactant>
    <organismsDiffer>false</organismsDiffer>
    <experiments>5</experiments>
</comment>
<comment type="interaction">
    <interactant intactId="EBI-1117383">
        <id>P23862</id>
    </interactant>
    <interactant intactId="EBI-549004">
        <id>P77732</id>
        <label>rhmR</label>
    </interactant>
    <organismsDiffer>false</organismsDiffer>
    <experiments>3</experiments>
</comment>
<comment type="domain">
    <text evidence="10 11">The N-terminus weakly binds single-stranded (ss)DNA (PubMed:23868391). The C-terminus (residues 96-175) binds ssDNA as well as full-length protein (PubMed:23819889).</text>
</comment>
<comment type="disruption phenotype">
    <text evidence="2 3 4 8 13">Called priC303, no visible growth phenotype (PubMed:10540288, PubMed:11532137, PubMed:22636770). Resumption of DNA synthesis after arrest of DNA replication (upon UV treatment) is slower than wild-type, no change in survival after UV treatment (PubMed:22636770). Double priB-priC deletion is synthetically lethal, causes a drastic reduction in cell growth and/or viability (PubMed:10540288, PubMed:36326440). Double priA-priC deletion is synthetically lethal (PubMed:10835375).</text>
</comment>
<comment type="similarity">
    <text evidence="18">Belongs to the PriC family.</text>
</comment>
<sequence>MKTALLLEKLEGQLATLRQRCAPVSQFATLSARFDRHLFQTRATTLQACLDEAGDNLAALRHAVEQQQLPQVAWLAEHLAAQLEAIAREASAWSLREWDSAPPKIARWQRKRIQHQDFERRLREMVAERRARLARVTDLVEQQTLHREVEAYEARLARCRHALEKIENRLARLTR</sequence>
<proteinExistence type="evidence at protein level"/>
<name>PRIC_ECOLI</name>
<keyword id="KW-0002">3D-structure</keyword>
<keyword id="KW-0903">Direct protein sequencing</keyword>
<keyword id="KW-0235">DNA replication</keyword>
<keyword id="KW-0238">DNA-binding</keyword>
<keyword id="KW-0639">Primosome</keyword>
<keyword id="KW-1185">Reference proteome</keyword>
<organism>
    <name type="scientific">Escherichia coli (strain K12)</name>
    <dbReference type="NCBI Taxonomy" id="83333"/>
    <lineage>
        <taxon>Bacteria</taxon>
        <taxon>Pseudomonadati</taxon>
        <taxon>Pseudomonadota</taxon>
        <taxon>Gammaproteobacteria</taxon>
        <taxon>Enterobacterales</taxon>
        <taxon>Enterobacteriaceae</taxon>
        <taxon>Escherichia</taxon>
    </lineage>
</organism>
<reference evidence="20" key="1">
    <citation type="journal article" date="1991" name="J. Biol. Chem.">
        <title>The priB and priC replication proteins of Escherichia coli. Genes, DNA sequence, overexpression, and purification.</title>
        <authorList>
            <person name="Zavitz K.H."/>
            <person name="Digate R.J."/>
            <person name="Marians K.J."/>
        </authorList>
    </citation>
    <scope>NUCLEOTIDE SEQUENCE [GENOMIC DNA]</scope>
    <scope>PROTEIN SEQUENCE OF 2-19</scope>
    <scope>FUNCTION</scope>
    <source>
        <strain>K12 / HMS83</strain>
    </source>
</reference>
<reference key="2">
    <citation type="submission" date="1997-01" db="EMBL/GenBank/DDBJ databases">
        <title>Sequence of minutes 4-25 of Escherichia coli.</title>
        <authorList>
            <person name="Chung E."/>
            <person name="Allen E."/>
            <person name="Araujo R."/>
            <person name="Aparicio A.M."/>
            <person name="Davis K."/>
            <person name="Duncan M."/>
            <person name="Federspiel N."/>
            <person name="Hyman R."/>
            <person name="Kalman S."/>
            <person name="Komp C."/>
            <person name="Kurdi O."/>
            <person name="Lew H."/>
            <person name="Lin D."/>
            <person name="Namath A."/>
            <person name="Oefner P."/>
            <person name="Roberts D."/>
            <person name="Schramm S."/>
            <person name="Davis R.W."/>
        </authorList>
    </citation>
    <scope>NUCLEOTIDE SEQUENCE [LARGE SCALE GENOMIC DNA]</scope>
    <source>
        <strain>K12 / MG1655 / ATCC 47076</strain>
    </source>
</reference>
<reference key="3">
    <citation type="journal article" date="1997" name="Science">
        <title>The complete genome sequence of Escherichia coli K-12.</title>
        <authorList>
            <person name="Blattner F.R."/>
            <person name="Plunkett G. III"/>
            <person name="Bloch C.A."/>
            <person name="Perna N.T."/>
            <person name="Burland V."/>
            <person name="Riley M."/>
            <person name="Collado-Vides J."/>
            <person name="Glasner J.D."/>
            <person name="Rode C.K."/>
            <person name="Mayhew G.F."/>
            <person name="Gregor J."/>
            <person name="Davis N.W."/>
            <person name="Kirkpatrick H.A."/>
            <person name="Goeden M.A."/>
            <person name="Rose D.J."/>
            <person name="Mau B."/>
            <person name="Shao Y."/>
        </authorList>
    </citation>
    <scope>NUCLEOTIDE SEQUENCE [LARGE SCALE GENOMIC DNA]</scope>
    <source>
        <strain>K12 / MG1655 / ATCC 47076</strain>
    </source>
</reference>
<reference key="4">
    <citation type="journal article" date="2006" name="Mol. Syst. Biol.">
        <title>Highly accurate genome sequences of Escherichia coli K-12 strains MG1655 and W3110.</title>
        <authorList>
            <person name="Hayashi K."/>
            <person name="Morooka N."/>
            <person name="Yamamoto Y."/>
            <person name="Fujita K."/>
            <person name="Isono K."/>
            <person name="Choi S."/>
            <person name="Ohtsubo E."/>
            <person name="Baba T."/>
            <person name="Wanner B.L."/>
            <person name="Mori H."/>
            <person name="Horiuchi T."/>
        </authorList>
    </citation>
    <scope>NUCLEOTIDE SEQUENCE [LARGE SCALE GENOMIC DNA]</scope>
    <source>
        <strain>K12 / W3110 / ATCC 27325 / DSM 5911</strain>
    </source>
</reference>
<reference key="5">
    <citation type="journal article" date="1981" name="Proc. Natl. Acad. Sci. U.S.A.">
        <title>Unique primed start of phage phi X174 DNA replication and mobility of the primosome in a direction opposite chain synthesis.</title>
        <authorList>
            <person name="Arai K."/>
            <person name="Kornberg A."/>
        </authorList>
    </citation>
    <scope>PRIMOSOME SUBUNITS</scope>
</reference>
<reference key="6">
    <citation type="journal article" date="1990" name="Proc. Natl. Acad. Sci. U.S.A.">
        <title>The priA gene encoding the primosomal replicative n' protein of Escherichia coli.</title>
        <authorList>
            <person name="Lee E.H."/>
            <person name="Masai H."/>
            <person name="Allen G.C. Jr."/>
            <person name="Kornberg A."/>
        </authorList>
    </citation>
    <scope>GENE NAME</scope>
</reference>
<reference key="7">
    <citation type="journal article" date="1996" name="J. Biol. Chem.">
        <title>The ordered assembly of the phiX174-type primosome. II. Preservation of primosome composition from assembly through replication.</title>
        <authorList>
            <person name="Ng J.Y."/>
            <person name="Marians K.J."/>
        </authorList>
    </citation>
    <scope>FUNCTION</scope>
    <scope>PRIMOSOME COMPLEX ASSEMBLY</scope>
</reference>
<reference key="8">
    <citation type="journal article" date="1999" name="Mol. Microbiol.">
        <title>dnaC mutations suppress defects in DNA replication- and recombination-associated functions in priB and priC double mutants in Escherichia coli K-12.</title>
        <authorList>
            <person name="Sandler S.J."/>
            <person name="Marians K.J."/>
            <person name="Zavitz K.H."/>
            <person name="Coutu J."/>
            <person name="Parent M.A."/>
            <person name="Clark A.J."/>
        </authorList>
    </citation>
    <scope>FUNCTION</scope>
    <scope>MULTIPLE REPLICATION RESTART PATHWAYS</scope>
    <scope>DISRUPTION PHENOTYPE</scope>
    <source>
        <strain>K12</strain>
    </source>
</reference>
<reference key="9">
    <citation type="journal article" date="2000" name="Genetics">
        <title>Multiple genetic pathways for restarting DNA replication forks in Escherichia coli K-12.</title>
        <authorList>
            <person name="Sandler S.J."/>
        </authorList>
    </citation>
    <scope>FUNCTION</scope>
    <scope>GENETIC ANALYSIS</scope>
    <scope>MULTIPLE REPLICATION RESTART PATHWAYS</scope>
    <scope>DISRUPTION PHENOTYPE</scope>
    <source>
        <strain>K12</strain>
    </source>
</reference>
<reference key="10">
    <citation type="journal article" date="2001" name="Mol. Microbiol.">
        <title>PriA mutations that affect PriA-PriC function during replication restart.</title>
        <authorList>
            <person name="Sandler S.J."/>
            <person name="McCool J.D."/>
            <person name="Do T.T."/>
            <person name="Johansen R.U."/>
        </authorList>
    </citation>
    <scope>MULTIPLE REPLICATION RESTART PATHWAYS</scope>
    <scope>DISRUPTION PHENOTYPE</scope>
    <source>
        <strain>K12</strain>
    </source>
</reference>
<reference key="11">
    <citation type="journal article" date="2005" name="Mol. Cell">
        <title>The disposition of nascent strands at stalled replication forks dictates the pathway of replisome loading during restart.</title>
        <authorList>
            <person name="Heller R.C."/>
            <person name="Marians K.J."/>
        </authorList>
    </citation>
    <scope>FUNCTION</scope>
</reference>
<reference key="12">
    <citation type="journal article" date="2007" name="DNA Repair">
        <title>Non-replicative helicases at the replication fork.</title>
        <authorList>
            <person name="Heller R.C."/>
            <person name="Marians K.J."/>
        </authorList>
    </citation>
    <scope>FUNCTION</scope>
</reference>
<reference key="13">
    <citation type="journal article" date="2012" name="J. Bacteriol.">
        <title>Cellular characterization of the primosome and rep helicase in processing and restoration of replication following arrest by UV-induced DNA damage in Escherichia coli.</title>
        <authorList>
            <person name="Courcelle C.T."/>
            <person name="Landstrom A.J."/>
            <person name="Anderson B."/>
            <person name="Courcelle J."/>
        </authorList>
    </citation>
    <scope>FUNCTION</scope>
    <scope>DISRUPTION PHENOTYPE</scope>
    <source>
        <strain>K12 / W3110 / SR108</strain>
    </source>
</reference>
<reference key="14">
    <citation type="journal article" date="2013" name="Genes Cells">
        <title>Domain separation and characterization of PriC, a replication restart primosome factor in Escherichia coli.</title>
        <authorList>
            <person name="Aramaki T."/>
            <person name="Abe Y."/>
            <person name="Ohkuri T."/>
            <person name="Mishima T."/>
            <person name="Yamashita S."/>
            <person name="Katayama T."/>
            <person name="Ueda T."/>
        </authorList>
    </citation>
    <scope>SUBUNIT</scope>
    <scope>DNA-BINDING</scope>
</reference>
<reference key="15">
    <citation type="journal article" date="2013" name="J. Biol. Chem.">
        <title>PriC-mediated DNA replication restart requires PriC complex formation with the single-stranded DNA-binding protein.</title>
        <authorList>
            <person name="Wessel S.R."/>
            <person name="Marceau A.H."/>
            <person name="Massoni S.C."/>
            <person name="Zhou R."/>
            <person name="Ha T."/>
            <person name="Sandler S.J."/>
            <person name="Keck J.L."/>
        </authorList>
    </citation>
    <scope>FUNCTION</scope>
    <scope>INTERACTION WITH SSB</scope>
    <scope>DNA-BINDING</scope>
    <scope>MUTAGENESIS OF ARG-121 AND ARG-155</scope>
</reference>
<reference key="16">
    <citation type="journal article" date="2016" name="J. Biol. Chem.">
        <title>Structure and Function of the PriC DNA Replication Restart Protein.</title>
        <authorList>
            <person name="Wessel S.R."/>
            <person name="Cornilescu C.C."/>
            <person name="Cornilescu G."/>
            <person name="Metz A."/>
            <person name="Leroux M."/>
            <person name="Hu K."/>
            <person name="Sandler S.J."/>
            <person name="Markley J.L."/>
            <person name="Keck J.L."/>
        </authorList>
    </citation>
    <scope>FUNCTION</scope>
    <scope>INTERACTION WITH DNAB</scope>
    <scope>MUTAGENESIS OF ARG-33; GLU-89 AND ARG-96</scope>
</reference>
<reference key="17">
    <citation type="journal article" date="2022" name="G3 (Bethesda)">
        <title>Identification of genetic interactions with priB links the PriA/PriB DNA replication restart pathway to double-strand DNA break repair in Escherichia coli.</title>
        <authorList>
            <person name="McKenzie A.M."/>
            <person name="Henry C."/>
            <person name="Myers K.S."/>
            <person name="Place M.M."/>
            <person name="Keck J.L."/>
        </authorList>
    </citation>
    <scope>GENETIC INTERACTION</scope>
    <scope>DISRUPTION PHENOTYPE</scope>
    <source>
        <strain>K12 / MG1655 / ATCC 47076</strain>
    </source>
</reference>
<reference evidence="21" key="18">
    <citation type="journal article" date="2013" name="Protein Sci.">
        <title>Solution structure of the N-terminal domain of a replication restart primosome factor, PriC, in Escherichia coli.</title>
        <authorList>
            <person name="Aramaki T."/>
            <person name="Abe Y."/>
            <person name="Katayama T."/>
            <person name="Ueda T."/>
        </authorList>
    </citation>
    <scope>STRUCTURE BY NMR OF 1-98</scope>
    <scope>DOMAIN</scope>
    <scope>DNA-BINDING</scope>
</reference>
<dbReference type="EMBL" id="D13958">
    <property type="protein sequence ID" value="BAA03055.1"/>
    <property type="molecule type" value="Genomic_DNA"/>
</dbReference>
<dbReference type="EMBL" id="U82664">
    <property type="protein sequence ID" value="AAB40221.1"/>
    <property type="molecule type" value="Genomic_DNA"/>
</dbReference>
<dbReference type="EMBL" id="U00096">
    <property type="protein sequence ID" value="AAC73569.1"/>
    <property type="molecule type" value="Genomic_DNA"/>
</dbReference>
<dbReference type="EMBL" id="AP009048">
    <property type="protein sequence ID" value="BAE76246.1"/>
    <property type="molecule type" value="Genomic_DNA"/>
</dbReference>
<dbReference type="PIR" id="JQ1149">
    <property type="entry name" value="JQ1149"/>
</dbReference>
<dbReference type="RefSeq" id="NP_415000.1">
    <property type="nucleotide sequence ID" value="NC_000913.3"/>
</dbReference>
<dbReference type="RefSeq" id="WP_000844874.1">
    <property type="nucleotide sequence ID" value="NZ_SSZK01000009.1"/>
</dbReference>
<dbReference type="PDB" id="2RT6">
    <property type="method" value="NMR"/>
    <property type="chains" value="A=1-98"/>
</dbReference>
<dbReference type="PDBsum" id="2RT6"/>
<dbReference type="BMRB" id="P23862"/>
<dbReference type="SMR" id="P23862"/>
<dbReference type="BioGRID" id="4262816">
    <property type="interactions" value="61"/>
</dbReference>
<dbReference type="BioGRID" id="849460">
    <property type="interactions" value="13"/>
</dbReference>
<dbReference type="ComplexPortal" id="CPX-1952">
    <property type="entry name" value="Replication restart pre-primosome complex, priAC variant"/>
</dbReference>
<dbReference type="ComplexPortal" id="CPX-1953">
    <property type="entry name" value="Replication restart pre-primosome complex priC-rep variant"/>
</dbReference>
<dbReference type="ComplexPortal" id="CPX-5909">
    <property type="entry name" value="Replication restart primosome complex, priAC variant"/>
</dbReference>
<dbReference type="ComplexPortal" id="CPX-5911">
    <property type="entry name" value="Replication restart primosome complex, priC-rep variant"/>
</dbReference>
<dbReference type="DIP" id="DIP-10564N"/>
<dbReference type="FunCoup" id="P23862">
    <property type="interactions" value="86"/>
</dbReference>
<dbReference type="IntAct" id="P23862">
    <property type="interactions" value="25"/>
</dbReference>
<dbReference type="STRING" id="511145.b0467"/>
<dbReference type="jPOST" id="P23862"/>
<dbReference type="PaxDb" id="511145-b0467"/>
<dbReference type="EnsemblBacteria" id="AAC73569">
    <property type="protein sequence ID" value="AAC73569"/>
    <property type="gene ID" value="b0467"/>
</dbReference>
<dbReference type="GeneID" id="75170485"/>
<dbReference type="GeneID" id="945071"/>
<dbReference type="KEGG" id="ecj:JW0456"/>
<dbReference type="KEGG" id="eco:b0467"/>
<dbReference type="KEGG" id="ecoc:C3026_02295"/>
<dbReference type="PATRIC" id="fig|1411691.4.peg.1809"/>
<dbReference type="EchoBASE" id="EB0758"/>
<dbReference type="eggNOG" id="COG3923">
    <property type="taxonomic scope" value="Bacteria"/>
</dbReference>
<dbReference type="HOGENOM" id="CLU_103284_0_0_6"/>
<dbReference type="InParanoid" id="P23862"/>
<dbReference type="OMA" id="QHQEYER"/>
<dbReference type="OrthoDB" id="6402824at2"/>
<dbReference type="PhylomeDB" id="P23862"/>
<dbReference type="BioCyc" id="EcoCyc:EG10765-MONOMER"/>
<dbReference type="BioCyc" id="MetaCyc:EG10765-MONOMER"/>
<dbReference type="EvolutionaryTrace" id="P23862"/>
<dbReference type="PRO" id="PR:P23862"/>
<dbReference type="Proteomes" id="UP000000625">
    <property type="component" value="Chromosome"/>
</dbReference>
<dbReference type="GO" id="GO:1990159">
    <property type="term" value="C:DnaB-DnaC-DnaT-PriA-PriC complex"/>
    <property type="evidence" value="ECO:0000303"/>
    <property type="project" value="ComplexPortal"/>
</dbReference>
<dbReference type="GO" id="GO:1990160">
    <property type="term" value="C:DnaB-DnaC-Rep-PriC complex"/>
    <property type="evidence" value="ECO:0000303"/>
    <property type="project" value="ComplexPortal"/>
</dbReference>
<dbReference type="GO" id="GO:1990077">
    <property type="term" value="C:primosome complex"/>
    <property type="evidence" value="ECO:0000303"/>
    <property type="project" value="ComplexPortal"/>
</dbReference>
<dbReference type="GO" id="GO:0003677">
    <property type="term" value="F:DNA binding"/>
    <property type="evidence" value="ECO:0000314"/>
    <property type="project" value="EcoCyc"/>
</dbReference>
<dbReference type="GO" id="GO:0006270">
    <property type="term" value="P:DNA replication initiation"/>
    <property type="evidence" value="ECO:0000314"/>
    <property type="project" value="EcoCyc"/>
</dbReference>
<dbReference type="GO" id="GO:0006269">
    <property type="term" value="P:DNA replication, synthesis of primer"/>
    <property type="evidence" value="ECO:0000303"/>
    <property type="project" value="ComplexPortal"/>
</dbReference>
<dbReference type="GO" id="GO:0006261">
    <property type="term" value="P:DNA-templated DNA replication"/>
    <property type="evidence" value="ECO:0000315"/>
    <property type="project" value="EcoCyc"/>
</dbReference>
<dbReference type="GO" id="GO:0031297">
    <property type="term" value="P:replication fork processing"/>
    <property type="evidence" value="ECO:0000303"/>
    <property type="project" value="ComplexPortal"/>
</dbReference>
<dbReference type="FunFam" id="1.20.1270.340:FF:000001">
    <property type="entry name" value="Primosomal replication protein N"/>
    <property type="match status" value="1"/>
</dbReference>
<dbReference type="Gene3D" id="1.20.1270.340">
    <property type="match status" value="1"/>
</dbReference>
<dbReference type="InterPro" id="IPR038338">
    <property type="entry name" value="PriB/PriC_sf"/>
</dbReference>
<dbReference type="InterPro" id="IPR010890">
    <property type="entry name" value="Primosomal_replicat_PriB/PriC"/>
</dbReference>
<dbReference type="NCBIfam" id="NF007500">
    <property type="entry name" value="PRK10093.1"/>
    <property type="match status" value="1"/>
</dbReference>
<dbReference type="Pfam" id="PF07445">
    <property type="entry name" value="PriC"/>
    <property type="match status" value="1"/>
</dbReference>
<accession>P23862</accession>
<accession>Q2MBW0</accession>
<gene>
    <name evidence="16" type="primary">priC</name>
    <name type="ordered locus">b0467</name>
    <name type="ordered locus">JW0456</name>
</gene>
<protein>
    <recommendedName>
        <fullName evidence="18">Replication restart protein PriC</fullName>
    </recommendedName>
    <alternativeName>
        <fullName evidence="17">Primosomal replication protein n''</fullName>
    </alternativeName>
</protein>